<accession>Q5ZXH8</accession>
<evidence type="ECO:0000269" key="1">
    <source>
    </source>
</evidence>
<evidence type="ECO:0000305" key="2"/>
<name>NEUCH_LEGPH</name>
<dbReference type="EC" id="3.2.1.184"/>
<dbReference type="EMBL" id="AE017354">
    <property type="protein sequence ID" value="AAU26842.1"/>
    <property type="molecule type" value="Genomic_DNA"/>
</dbReference>
<dbReference type="RefSeq" id="YP_094789.1">
    <property type="nucleotide sequence ID" value="NC_002942.5"/>
</dbReference>
<dbReference type="SMR" id="Q5ZXH8"/>
<dbReference type="STRING" id="272624.lpg0753"/>
<dbReference type="PaxDb" id="272624-lpg0753"/>
<dbReference type="KEGG" id="lpn:lpg0753"/>
<dbReference type="PATRIC" id="fig|272624.6.peg.778"/>
<dbReference type="eggNOG" id="COG0381">
    <property type="taxonomic scope" value="Bacteria"/>
</dbReference>
<dbReference type="HOGENOM" id="CLU_061127_0_0_6"/>
<dbReference type="OrthoDB" id="9803238at2"/>
<dbReference type="BioCyc" id="MetaCyc:MONOMER-17728"/>
<dbReference type="Proteomes" id="UP000000609">
    <property type="component" value="Chromosome"/>
</dbReference>
<dbReference type="GO" id="GO:0004553">
    <property type="term" value="F:hydrolase activity, hydrolyzing O-glycosyl compounds"/>
    <property type="evidence" value="ECO:0000314"/>
    <property type="project" value="UniProtKB"/>
</dbReference>
<dbReference type="GO" id="GO:0102388">
    <property type="term" value="F:UDP-N,N'-diacetylbacillosamine 2-epimerase activity"/>
    <property type="evidence" value="ECO:0007669"/>
    <property type="project" value="UniProtKB-EC"/>
</dbReference>
<dbReference type="GO" id="GO:0016051">
    <property type="term" value="P:carbohydrate biosynthetic process"/>
    <property type="evidence" value="ECO:0000314"/>
    <property type="project" value="UniProtKB"/>
</dbReference>
<dbReference type="GO" id="GO:0006047">
    <property type="term" value="P:UDP-N-acetylglucosamine metabolic process"/>
    <property type="evidence" value="ECO:0007669"/>
    <property type="project" value="InterPro"/>
</dbReference>
<dbReference type="CDD" id="cd03786">
    <property type="entry name" value="GTB_UDP-GlcNAc_2-Epimerase"/>
    <property type="match status" value="1"/>
</dbReference>
<dbReference type="Gene3D" id="3.40.50.2000">
    <property type="entry name" value="Glycogen Phosphorylase B"/>
    <property type="match status" value="2"/>
</dbReference>
<dbReference type="InterPro" id="IPR020004">
    <property type="entry name" value="UDP-GlcNAc_Epase"/>
</dbReference>
<dbReference type="InterPro" id="IPR003331">
    <property type="entry name" value="UDP_GlcNAc_Epimerase_2_dom"/>
</dbReference>
<dbReference type="InterPro" id="IPR029767">
    <property type="entry name" value="WecB-like"/>
</dbReference>
<dbReference type="NCBIfam" id="TIGR03568">
    <property type="entry name" value="NeuC_NnaA"/>
    <property type="match status" value="1"/>
</dbReference>
<dbReference type="PANTHER" id="PTHR43174">
    <property type="entry name" value="UDP-N-ACETYLGLUCOSAMINE 2-EPIMERASE"/>
    <property type="match status" value="1"/>
</dbReference>
<dbReference type="PANTHER" id="PTHR43174:SF3">
    <property type="entry name" value="UDP-N-ACETYLGLUCOSAMINE 2-EPIMERASE"/>
    <property type="match status" value="1"/>
</dbReference>
<dbReference type="Pfam" id="PF02350">
    <property type="entry name" value="Epimerase_2"/>
    <property type="match status" value="1"/>
</dbReference>
<dbReference type="SUPFAM" id="SSF53756">
    <property type="entry name" value="UDP-Glycosyltransferase/glycogen phosphorylase"/>
    <property type="match status" value="1"/>
</dbReference>
<keyword id="KW-0378">Hydrolase</keyword>
<keyword id="KW-1185">Reference proteome</keyword>
<keyword id="KW-0843">Virulence</keyword>
<gene>
    <name type="ordered locus">lpg0753</name>
</gene>
<organism>
    <name type="scientific">Legionella pneumophila subsp. pneumophila (strain Philadelphia 1 / ATCC 33152 / DSM 7513)</name>
    <dbReference type="NCBI Taxonomy" id="272624"/>
    <lineage>
        <taxon>Bacteria</taxon>
        <taxon>Pseudomonadati</taxon>
        <taxon>Pseudomonadota</taxon>
        <taxon>Gammaproteobacteria</taxon>
        <taxon>Legionellales</taxon>
        <taxon>Legionellaceae</taxon>
        <taxon>Legionella</taxon>
    </lineage>
</organism>
<sequence length="377" mass="42110">MIRKIIYVTGTRADYGLMREVLKRLHQSEDIDLSICVTGMHLDALYGNTVNEIKADQFSICGIIPVDLANAQHSSMAKAIGHELLGFTEVFESETPDVVLLLGDRGEMLAAAIAAIHLNIPVVHLHGGERSGTVDEMVRHAISKLSHYHFVATEASKQRLIRMGEKEETIFQVGAPGLDEIMQYKTSTRDVFNQRYGFDPDKKICLLIYHPVVQEVDSIKIQFQSVIQAALATNLQIICLEPNSDTGGHLIREVIQEYIDHPDVRIIKHLHRPEFIDCLANSDVMLGNSSSGIIEAASFNLNVVNVGSRQNLRERSDNVIDVDVTYDAILTGLREALNKPKIKYSNCYGDGKTSERCYQLLKTIPLHSQILNKCNAY</sequence>
<feature type="chain" id="PRO_0000424190" description="UDP-N,N'-diacetylbacillosamine 2-epimerase (hydrolyzing)">
    <location>
        <begin position="1"/>
        <end position="377"/>
    </location>
</feature>
<protein>
    <recommendedName>
        <fullName>UDP-N,N'-diacetylbacillosamine 2-epimerase (hydrolyzing)</fullName>
        <ecNumber>3.2.1.184</ecNumber>
    </recommendedName>
</protein>
<comment type="function">
    <text evidence="1">Involved in biosynthesis of legionaminic acid (5,7-diamino-3,5,7,9-tetradeoxy-D-glycero-D-galacto-non-2-ulosonic acid)(Leg), a sialic acid-like derivative that is incorporated into virulence-associated cell surface glycoconjugates such as lipopolysaccharide (LPS) which could be a key determinant in the ability of L.pneumophila to inhibit the fusion of phagosomes with lysosomes. LPS contains a majority alpha2,4-linked homomer of legionaminic acid. Catalyzes the conversion of UDP-N,N'-diacetylbacillosamine (Bac2Ac4Ac) into 2,4-diacetamido-2,4,6-trideoxymannose and UDP.</text>
</comment>
<comment type="catalytic activity">
    <reaction evidence="1">
        <text>UDP-N,N'-diacetylbacillosamine + H2O = 2,4-diacetamido-2,4,6-trideoxy-alpha-D-mannopyranose + UDP + H(+)</text>
        <dbReference type="Rhea" id="RHEA:34491"/>
        <dbReference type="ChEBI" id="CHEBI:15377"/>
        <dbReference type="ChEBI" id="CHEBI:15378"/>
        <dbReference type="ChEBI" id="CHEBI:58223"/>
        <dbReference type="ChEBI" id="CHEBI:67134"/>
        <dbReference type="ChEBI" id="CHEBI:68645"/>
        <dbReference type="EC" id="3.2.1.184"/>
    </reaction>
</comment>
<comment type="biophysicochemical properties">
    <kinetics>
        <KM evidence="1">36.5 uM for UDP-N,N'-diacetylbacillosamine (at pH 7.5 and 37 degrees Celsius)</KM>
        <text>kcat is 59.1 sec(-1) for UDP-N,N'-diacetylbacillosamine (at pH 7.5 and 37 degrees Celsius).</text>
    </kinetics>
</comment>
<comment type="similarity">
    <text evidence="2">Belongs to the UDP-N-acetylglucosamine 2-epimerase family.</text>
</comment>
<reference key="1">
    <citation type="journal article" date="2004" name="Science">
        <title>The genomic sequence of the accidental pathogen Legionella pneumophila.</title>
        <authorList>
            <person name="Chien M."/>
            <person name="Morozova I."/>
            <person name="Shi S."/>
            <person name="Sheng H."/>
            <person name="Chen J."/>
            <person name="Gomez S.M."/>
            <person name="Asamani G."/>
            <person name="Hill K."/>
            <person name="Nuara J."/>
            <person name="Feder M."/>
            <person name="Rineer J."/>
            <person name="Greenberg J.J."/>
            <person name="Steshenko V."/>
            <person name="Park S.H."/>
            <person name="Zhao B."/>
            <person name="Teplitskaya E."/>
            <person name="Edwards J.R."/>
            <person name="Pampou S."/>
            <person name="Georghiou A."/>
            <person name="Chou I.-C."/>
            <person name="Iannuccilli W."/>
            <person name="Ulz M.E."/>
            <person name="Kim D.H."/>
            <person name="Geringer-Sameth A."/>
            <person name="Goldsberry C."/>
            <person name="Morozov P."/>
            <person name="Fischer S.G."/>
            <person name="Segal G."/>
            <person name="Qu X."/>
            <person name="Rzhetsky A."/>
            <person name="Zhang P."/>
            <person name="Cayanis E."/>
            <person name="De Jong P.J."/>
            <person name="Ju J."/>
            <person name="Kalachikov S."/>
            <person name="Shuman H.A."/>
            <person name="Russo J.J."/>
        </authorList>
    </citation>
    <scope>NUCLEOTIDE SEQUENCE [LARGE SCALE GENOMIC DNA]</scope>
    <source>
        <strain>Philadelphia 1 / ATCC 33152 / DSM 7513</strain>
    </source>
</reference>
<reference key="2">
    <citation type="journal article" date="2008" name="Biochemistry">
        <title>Biosynthesis of CMP-N,N'-diacetyllegionaminic acid from UDP-N,N'-diacetylbacillosamine in Legionella pneumophila.</title>
        <authorList>
            <person name="Glaze P.A."/>
            <person name="Watson D.C."/>
            <person name="Young N.M."/>
            <person name="Tanner M.E."/>
        </authorList>
    </citation>
    <scope>FUNCTION</scope>
    <scope>CATALYTIC ACTIVITY</scope>
    <scope>BIOPHYSICOCHEMICAL PROPERTIES</scope>
    <scope>REACTION MECHANISM</scope>
    <source>
        <strain>Philadelphia 1 / ATCC 33152 / DSM 7513</strain>
    </source>
</reference>
<proteinExistence type="evidence at protein level"/>